<keyword id="KW-0175">Coiled coil</keyword>
<keyword id="KW-0963">Cytoplasm</keyword>
<keyword id="KW-0238">DNA-binding</keyword>
<keyword id="KW-0539">Nucleus</keyword>
<keyword id="KW-0597">Phosphoprotein</keyword>
<keyword id="KW-1185">Reference proteome</keyword>
<keyword id="KW-0346">Stress response</keyword>
<keyword id="KW-0804">Transcription</keyword>
<keyword id="KW-0805">Transcription regulation</keyword>
<gene>
    <name type="primary">HSFB1</name>
    <name type="synonym">HSF23</name>
    <name type="ordered locus">Os09g0456800</name>
    <name type="ordered locus">LOC_Os09g28354</name>
    <name type="ordered locus">LOC_Os09g28360</name>
    <name type="ORF">B1342C04.35</name>
</gene>
<organism>
    <name type="scientific">Oryza sativa subsp. japonica</name>
    <name type="common">Rice</name>
    <dbReference type="NCBI Taxonomy" id="39947"/>
    <lineage>
        <taxon>Eukaryota</taxon>
        <taxon>Viridiplantae</taxon>
        <taxon>Streptophyta</taxon>
        <taxon>Embryophyta</taxon>
        <taxon>Tracheophyta</taxon>
        <taxon>Spermatophyta</taxon>
        <taxon>Magnoliopsida</taxon>
        <taxon>Liliopsida</taxon>
        <taxon>Poales</taxon>
        <taxon>Poaceae</taxon>
        <taxon>BOP clade</taxon>
        <taxon>Oryzoideae</taxon>
        <taxon>Oryzeae</taxon>
        <taxon>Oryzinae</taxon>
        <taxon>Oryza</taxon>
        <taxon>Oryza sativa</taxon>
    </lineage>
</organism>
<accession>Q67TP9</accession>
<accession>B7E6C6</accession>
<protein>
    <recommendedName>
        <fullName>Heat stress transcription factor B-1</fullName>
    </recommendedName>
    <alternativeName>
        <fullName>Heat stress transcription factor 23</fullName>
        <shortName>OsHsf-23</shortName>
    </alternativeName>
</protein>
<evidence type="ECO:0000250" key="1"/>
<evidence type="ECO:0000255" key="2"/>
<evidence type="ECO:0000256" key="3">
    <source>
        <dbReference type="SAM" id="MobiDB-lite"/>
    </source>
</evidence>
<evidence type="ECO:0000305" key="4"/>
<feature type="chain" id="PRO_0000350833" description="Heat stress transcription factor B-1">
    <location>
        <begin position="1"/>
        <end position="302"/>
    </location>
</feature>
<feature type="region of interest" description="Disordered" evidence="3">
    <location>
        <begin position="1"/>
        <end position="33"/>
    </location>
</feature>
<feature type="region of interest" description="Disordered" evidence="3">
    <location>
        <begin position="116"/>
        <end position="184"/>
    </location>
</feature>
<feature type="region of interest" description="Hydrophobic repeat HR-A/B">
    <location>
        <begin position="180"/>
        <end position="209"/>
    </location>
</feature>
<feature type="coiled-coil region" evidence="2">
    <location>
        <begin position="170"/>
        <end position="202"/>
    </location>
</feature>
<feature type="short sequence motif" description="Nuclear export signal" evidence="2">
    <location>
        <begin position="211"/>
        <end position="218"/>
    </location>
</feature>
<feature type="short sequence motif" description="Nuclear localization signal" evidence="2">
    <location>
        <begin position="263"/>
        <end position="267"/>
    </location>
</feature>
<feature type="compositionally biased region" description="Low complexity" evidence="3">
    <location>
        <begin position="1"/>
        <end position="15"/>
    </location>
</feature>
<feature type="compositionally biased region" description="Gly residues" evidence="3">
    <location>
        <begin position="16"/>
        <end position="28"/>
    </location>
</feature>
<feature type="compositionally biased region" description="Polar residues" evidence="3">
    <location>
        <begin position="123"/>
        <end position="133"/>
    </location>
</feature>
<feature type="compositionally biased region" description="Pro residues" evidence="3">
    <location>
        <begin position="139"/>
        <end position="150"/>
    </location>
</feature>
<feature type="compositionally biased region" description="Low complexity" evidence="3">
    <location>
        <begin position="151"/>
        <end position="172"/>
    </location>
</feature>
<dbReference type="EMBL" id="AP006057">
    <property type="protein sequence ID" value="BAD38472.1"/>
    <property type="molecule type" value="Genomic_DNA"/>
</dbReference>
<dbReference type="EMBL" id="AP008215">
    <property type="protein sequence ID" value="BAF25278.1"/>
    <property type="molecule type" value="Genomic_DNA"/>
</dbReference>
<dbReference type="EMBL" id="AP014965">
    <property type="protein sequence ID" value="BAT08436.1"/>
    <property type="molecule type" value="Genomic_DNA"/>
</dbReference>
<dbReference type="EMBL" id="AK061433">
    <property type="protein sequence ID" value="BAG87923.1"/>
    <property type="molecule type" value="mRNA"/>
</dbReference>
<dbReference type="RefSeq" id="XP_015611859.1">
    <property type="nucleotide sequence ID" value="XM_015756373.1"/>
</dbReference>
<dbReference type="SMR" id="Q67TP9"/>
<dbReference type="FunCoup" id="Q67TP9">
    <property type="interactions" value="21"/>
</dbReference>
<dbReference type="STRING" id="39947.Q67TP9"/>
<dbReference type="PaxDb" id="39947-Q67TP9"/>
<dbReference type="EnsemblPlants" id="Os09t0456800-01">
    <property type="protein sequence ID" value="Os09t0456800-01"/>
    <property type="gene ID" value="Os09g0456800"/>
</dbReference>
<dbReference type="Gramene" id="Os09t0456800-01">
    <property type="protein sequence ID" value="Os09t0456800-01"/>
    <property type="gene ID" value="Os09g0456800"/>
</dbReference>
<dbReference type="KEGG" id="dosa:Os09g0456800"/>
<dbReference type="eggNOG" id="KOG0627">
    <property type="taxonomic scope" value="Eukaryota"/>
</dbReference>
<dbReference type="HOGENOM" id="CLU_030308_3_1_1"/>
<dbReference type="InParanoid" id="Q67TP9"/>
<dbReference type="OMA" id="IGEPWVS"/>
<dbReference type="OrthoDB" id="60033at2759"/>
<dbReference type="Proteomes" id="UP000000763">
    <property type="component" value="Chromosome 9"/>
</dbReference>
<dbReference type="Proteomes" id="UP000059680">
    <property type="component" value="Chromosome 9"/>
</dbReference>
<dbReference type="ExpressionAtlas" id="Q67TP9">
    <property type="expression patterns" value="baseline and differential"/>
</dbReference>
<dbReference type="GO" id="GO:0005737">
    <property type="term" value="C:cytoplasm"/>
    <property type="evidence" value="ECO:0007669"/>
    <property type="project" value="UniProtKB-SubCell"/>
</dbReference>
<dbReference type="GO" id="GO:0005634">
    <property type="term" value="C:nucleus"/>
    <property type="evidence" value="ECO:0000318"/>
    <property type="project" value="GO_Central"/>
</dbReference>
<dbReference type="GO" id="GO:0003700">
    <property type="term" value="F:DNA-binding transcription factor activity"/>
    <property type="evidence" value="ECO:0000318"/>
    <property type="project" value="GO_Central"/>
</dbReference>
<dbReference type="GO" id="GO:0043565">
    <property type="term" value="F:sequence-specific DNA binding"/>
    <property type="evidence" value="ECO:0007669"/>
    <property type="project" value="InterPro"/>
</dbReference>
<dbReference type="GO" id="GO:0045892">
    <property type="term" value="P:negative regulation of DNA-templated transcription"/>
    <property type="evidence" value="ECO:0007669"/>
    <property type="project" value="EnsemblPlants"/>
</dbReference>
<dbReference type="GO" id="GO:0006357">
    <property type="term" value="P:regulation of transcription by RNA polymerase II"/>
    <property type="evidence" value="ECO:0000318"/>
    <property type="project" value="GO_Central"/>
</dbReference>
<dbReference type="GO" id="GO:0009408">
    <property type="term" value="P:response to heat"/>
    <property type="evidence" value="ECO:0007669"/>
    <property type="project" value="EnsemblPlants"/>
</dbReference>
<dbReference type="FunFam" id="1.10.10.10:FF:000037">
    <property type="entry name" value="Heat stress transcription factor B-4"/>
    <property type="match status" value="1"/>
</dbReference>
<dbReference type="Gene3D" id="1.10.10.10">
    <property type="entry name" value="Winged helix-like DNA-binding domain superfamily/Winged helix DNA-binding domain"/>
    <property type="match status" value="1"/>
</dbReference>
<dbReference type="InterPro" id="IPR000232">
    <property type="entry name" value="HSF_DNA-bd"/>
</dbReference>
<dbReference type="InterPro" id="IPR036388">
    <property type="entry name" value="WH-like_DNA-bd_sf"/>
</dbReference>
<dbReference type="InterPro" id="IPR036390">
    <property type="entry name" value="WH_DNA-bd_sf"/>
</dbReference>
<dbReference type="PANTHER" id="PTHR10015">
    <property type="entry name" value="HEAT SHOCK TRANSCRIPTION FACTOR"/>
    <property type="match status" value="1"/>
</dbReference>
<dbReference type="PANTHER" id="PTHR10015:SF285">
    <property type="entry name" value="HEAT STRESS TRANSCRIPTION FACTOR B-3"/>
    <property type="match status" value="1"/>
</dbReference>
<dbReference type="Pfam" id="PF00447">
    <property type="entry name" value="HSF_DNA-bind"/>
    <property type="match status" value="1"/>
</dbReference>
<dbReference type="PRINTS" id="PR00056">
    <property type="entry name" value="HSFDOMAIN"/>
</dbReference>
<dbReference type="SMART" id="SM00415">
    <property type="entry name" value="HSF"/>
    <property type="match status" value="1"/>
</dbReference>
<dbReference type="SUPFAM" id="SSF46785">
    <property type="entry name" value="Winged helix' DNA-binding domain"/>
    <property type="match status" value="1"/>
</dbReference>
<dbReference type="PROSITE" id="PS00434">
    <property type="entry name" value="HSF_DOMAIN"/>
    <property type="match status" value="1"/>
</dbReference>
<proteinExistence type="evidence at transcript level"/>
<comment type="function">
    <text evidence="1">Transcriptional regulator that specifically binds DNA of heat shock promoter elements (HSE).</text>
</comment>
<comment type="subunit">
    <text evidence="1">Homotrimer.</text>
</comment>
<comment type="subcellular location">
    <subcellularLocation>
        <location evidence="4">Cytoplasm</location>
    </subcellularLocation>
    <subcellularLocation>
        <location evidence="4">Nucleus</location>
    </subcellularLocation>
</comment>
<comment type="domain">
    <text>The hydrophobic-rich region (HR-A/B) corresponds to the oligomerization domain.</text>
</comment>
<comment type="PTM">
    <text evidence="1">Exhibits temperature-dependent phosphorylation.</text>
</comment>
<comment type="similarity">
    <text evidence="4">Belongs to the HSF family. Class B subfamily.</text>
</comment>
<reference key="1">
    <citation type="journal article" date="2005" name="Nature">
        <title>The map-based sequence of the rice genome.</title>
        <authorList>
            <consortium name="International rice genome sequencing project (IRGSP)"/>
        </authorList>
    </citation>
    <scope>NUCLEOTIDE SEQUENCE [LARGE SCALE GENOMIC DNA]</scope>
    <source>
        <strain>cv. Nipponbare</strain>
    </source>
</reference>
<reference key="2">
    <citation type="journal article" date="2008" name="Nucleic Acids Res.">
        <title>The rice annotation project database (RAP-DB): 2008 update.</title>
        <authorList>
            <consortium name="The rice annotation project (RAP)"/>
        </authorList>
    </citation>
    <scope>GENOME REANNOTATION</scope>
    <source>
        <strain>cv. Nipponbare</strain>
    </source>
</reference>
<reference key="3">
    <citation type="journal article" date="2013" name="Rice">
        <title>Improvement of the Oryza sativa Nipponbare reference genome using next generation sequence and optical map data.</title>
        <authorList>
            <person name="Kawahara Y."/>
            <person name="de la Bastide M."/>
            <person name="Hamilton J.P."/>
            <person name="Kanamori H."/>
            <person name="McCombie W.R."/>
            <person name="Ouyang S."/>
            <person name="Schwartz D.C."/>
            <person name="Tanaka T."/>
            <person name="Wu J."/>
            <person name="Zhou S."/>
            <person name="Childs K.L."/>
            <person name="Davidson R.M."/>
            <person name="Lin H."/>
            <person name="Quesada-Ocampo L."/>
            <person name="Vaillancourt B."/>
            <person name="Sakai H."/>
            <person name="Lee S.S."/>
            <person name="Kim J."/>
            <person name="Numa H."/>
            <person name="Itoh T."/>
            <person name="Buell C.R."/>
            <person name="Matsumoto T."/>
        </authorList>
    </citation>
    <scope>GENOME REANNOTATION</scope>
    <source>
        <strain>cv. Nipponbare</strain>
    </source>
</reference>
<reference key="4">
    <citation type="journal article" date="2003" name="Science">
        <title>Collection, mapping, and annotation of over 28,000 cDNA clones from japonica rice.</title>
        <authorList>
            <consortium name="The rice full-length cDNA consortium"/>
        </authorList>
    </citation>
    <scope>NUCLEOTIDE SEQUENCE [LARGE SCALE MRNA]</scope>
    <source>
        <strain>cv. Nipponbare</strain>
    </source>
</reference>
<reference key="5">
    <citation type="journal article" date="2004" name="J. Biosci.">
        <title>Heat stress response in plants: a complex game with chaperones and more than twenty heat stress transcription factors.</title>
        <authorList>
            <person name="Baniwal S.K."/>
            <person name="Bharti K."/>
            <person name="Chan K.Y."/>
            <person name="Fauth M."/>
            <person name="Ganguli A."/>
            <person name="Kotak S."/>
            <person name="Mishra S.K."/>
            <person name="Nover L."/>
            <person name="Port M."/>
            <person name="Scharf K.-D."/>
            <person name="Tripp J."/>
            <person name="Weber C."/>
            <person name="Zielinski D."/>
            <person name="von Koskull-Doering P."/>
        </authorList>
    </citation>
    <scope>GENE FAMILY</scope>
    <scope>NOMENCLATURE</scope>
</reference>
<reference key="6">
    <citation type="journal article" date="2008" name="J. Genet. Genomics">
        <title>Genome-wide analysis of heat shock transcription factor families in rice and Arabidopsis.</title>
        <authorList>
            <person name="Guo J."/>
            <person name="Wu J."/>
            <person name="Ji Q."/>
            <person name="Wang C."/>
            <person name="Luo L."/>
            <person name="Yuan Y."/>
            <person name="Wang Y."/>
            <person name="Wang J."/>
        </authorList>
    </citation>
    <scope>GENE FAMILY</scope>
    <scope>NOMENCLATURE</scope>
</reference>
<name>HSFB1_ORYSJ</name>
<sequence>MAAAEAAAAVGKQQQKGGGGRGGGGGGPAPFLTKTNQMVEESATDEVISWGKEGRSFVVWKPVEFARDLLPLHFKHCNFSSFVRQLNTYGFRKVVPDRWEFANGNFRRGEQGLLSGIRRRKATTPQSSKSCGSGVNVAFPPPLPPLPPEPSATTSSGNDRSSSSASSPPRADITSENEQLRKDNQTLTMELARARRHCEELLGFLSRFLDVRQLDLRLLMQEDMRAAAGGVGGEQRVQEHAREEKCVKLFGVLLDDTHGAATRKRARCEEAAASERPIKMIRIGEPWVSVPSSGPARCGGDN</sequence>